<sequence>MSRTLPHLLSPDPASPFPPAERALREPDGLLAIGGDLHPQRLLNAYAHGIFPWFSDGQPLLWWSPNPRTVFRTDAIHLSSRFRRQLRTCTWTLRADTAFAQVIAACASSPRPGQDGTWITDQMQEAYLDLHRRGYAHSVEVFDGARLVGGIYGVAIGQMFFGESMFSGASGGSKIALAALAAKLHGLGWPLIDAQVENAHLMRLGAQRLPREQFLQHVATQVALPEPPGSWTQRYGERHASGLAGVRLT</sequence>
<gene>
    <name evidence="1" type="primary">aat</name>
    <name type="ordered locus">xcc-b100_2268</name>
</gene>
<accession>B0RT37</accession>
<reference key="1">
    <citation type="journal article" date="2008" name="J. Biotechnol.">
        <title>The genome of Xanthomonas campestris pv. campestris B100 and its use for the reconstruction of metabolic pathways involved in xanthan biosynthesis.</title>
        <authorList>
            <person name="Vorhoelter F.-J."/>
            <person name="Schneiker S."/>
            <person name="Goesmann A."/>
            <person name="Krause L."/>
            <person name="Bekel T."/>
            <person name="Kaiser O."/>
            <person name="Linke B."/>
            <person name="Patschkowski T."/>
            <person name="Rueckert C."/>
            <person name="Schmid J."/>
            <person name="Sidhu V.K."/>
            <person name="Sieber V."/>
            <person name="Tauch A."/>
            <person name="Watt S.A."/>
            <person name="Weisshaar B."/>
            <person name="Becker A."/>
            <person name="Niehaus K."/>
            <person name="Puehler A."/>
        </authorList>
    </citation>
    <scope>NUCLEOTIDE SEQUENCE [LARGE SCALE GENOMIC DNA]</scope>
    <source>
        <strain>B100</strain>
    </source>
</reference>
<proteinExistence type="inferred from homology"/>
<comment type="function">
    <text evidence="1">Functions in the N-end rule pathway of protein degradation where it conjugates Leu, Phe and, less efficiently, Met from aminoacyl-tRNAs to the N-termini of proteins containing an N-terminal arginine or lysine.</text>
</comment>
<comment type="catalytic activity">
    <reaction evidence="1">
        <text>N-terminal L-lysyl-[protein] + L-leucyl-tRNA(Leu) = N-terminal L-leucyl-L-lysyl-[protein] + tRNA(Leu) + H(+)</text>
        <dbReference type="Rhea" id="RHEA:12340"/>
        <dbReference type="Rhea" id="RHEA-COMP:9613"/>
        <dbReference type="Rhea" id="RHEA-COMP:9622"/>
        <dbReference type="Rhea" id="RHEA-COMP:12670"/>
        <dbReference type="Rhea" id="RHEA-COMP:12671"/>
        <dbReference type="ChEBI" id="CHEBI:15378"/>
        <dbReference type="ChEBI" id="CHEBI:65249"/>
        <dbReference type="ChEBI" id="CHEBI:78442"/>
        <dbReference type="ChEBI" id="CHEBI:78494"/>
        <dbReference type="ChEBI" id="CHEBI:133043"/>
        <dbReference type="EC" id="2.3.2.6"/>
    </reaction>
</comment>
<comment type="catalytic activity">
    <reaction evidence="1">
        <text>N-terminal L-arginyl-[protein] + L-leucyl-tRNA(Leu) = N-terminal L-leucyl-L-arginyl-[protein] + tRNA(Leu) + H(+)</text>
        <dbReference type="Rhea" id="RHEA:50416"/>
        <dbReference type="Rhea" id="RHEA-COMP:9613"/>
        <dbReference type="Rhea" id="RHEA-COMP:9622"/>
        <dbReference type="Rhea" id="RHEA-COMP:12672"/>
        <dbReference type="Rhea" id="RHEA-COMP:12673"/>
        <dbReference type="ChEBI" id="CHEBI:15378"/>
        <dbReference type="ChEBI" id="CHEBI:64719"/>
        <dbReference type="ChEBI" id="CHEBI:78442"/>
        <dbReference type="ChEBI" id="CHEBI:78494"/>
        <dbReference type="ChEBI" id="CHEBI:133044"/>
        <dbReference type="EC" id="2.3.2.6"/>
    </reaction>
</comment>
<comment type="catalytic activity">
    <reaction evidence="1">
        <text>L-phenylalanyl-tRNA(Phe) + an N-terminal L-alpha-aminoacyl-[protein] = an N-terminal L-phenylalanyl-L-alpha-aminoacyl-[protein] + tRNA(Phe)</text>
        <dbReference type="Rhea" id="RHEA:43632"/>
        <dbReference type="Rhea" id="RHEA-COMP:9668"/>
        <dbReference type="Rhea" id="RHEA-COMP:9699"/>
        <dbReference type="Rhea" id="RHEA-COMP:10636"/>
        <dbReference type="Rhea" id="RHEA-COMP:10637"/>
        <dbReference type="ChEBI" id="CHEBI:78442"/>
        <dbReference type="ChEBI" id="CHEBI:78531"/>
        <dbReference type="ChEBI" id="CHEBI:78597"/>
        <dbReference type="ChEBI" id="CHEBI:83561"/>
        <dbReference type="EC" id="2.3.2.6"/>
    </reaction>
</comment>
<comment type="subcellular location">
    <subcellularLocation>
        <location evidence="1">Cytoplasm</location>
    </subcellularLocation>
</comment>
<comment type="similarity">
    <text evidence="1">Belongs to the L/F-transferase family.</text>
</comment>
<evidence type="ECO:0000255" key="1">
    <source>
        <dbReference type="HAMAP-Rule" id="MF_00688"/>
    </source>
</evidence>
<evidence type="ECO:0000256" key="2">
    <source>
        <dbReference type="SAM" id="MobiDB-lite"/>
    </source>
</evidence>
<dbReference type="EC" id="2.3.2.6" evidence="1"/>
<dbReference type="EMBL" id="AM920689">
    <property type="protein sequence ID" value="CAP51623.1"/>
    <property type="molecule type" value="Genomic_DNA"/>
</dbReference>
<dbReference type="SMR" id="B0RT37"/>
<dbReference type="KEGG" id="xca:xcc-b100_2268"/>
<dbReference type="HOGENOM" id="CLU_075045_0_0_6"/>
<dbReference type="Proteomes" id="UP000001188">
    <property type="component" value="Chromosome"/>
</dbReference>
<dbReference type="GO" id="GO:0005737">
    <property type="term" value="C:cytoplasm"/>
    <property type="evidence" value="ECO:0007669"/>
    <property type="project" value="UniProtKB-SubCell"/>
</dbReference>
<dbReference type="GO" id="GO:0008914">
    <property type="term" value="F:leucyl-tRNA--protein transferase activity"/>
    <property type="evidence" value="ECO:0007669"/>
    <property type="project" value="UniProtKB-UniRule"/>
</dbReference>
<dbReference type="GO" id="GO:0030163">
    <property type="term" value="P:protein catabolic process"/>
    <property type="evidence" value="ECO:0007669"/>
    <property type="project" value="UniProtKB-UniRule"/>
</dbReference>
<dbReference type="FunFam" id="3.30.70.3550:FF:000001">
    <property type="entry name" value="Leucyl/phenylalanyl-tRNA--protein transferase"/>
    <property type="match status" value="1"/>
</dbReference>
<dbReference type="Gene3D" id="3.40.630.70">
    <property type="entry name" value="Leucyl/phenylalanyl-tRNA-protein transferase, C-terminal domain"/>
    <property type="match status" value="1"/>
</dbReference>
<dbReference type="Gene3D" id="3.30.70.3550">
    <property type="entry name" value="Leucyl/phenylalanyl-tRNA-protein transferase, N-terminal domain"/>
    <property type="match status" value="1"/>
</dbReference>
<dbReference type="HAMAP" id="MF_00688">
    <property type="entry name" value="Leu_Phe_trans"/>
    <property type="match status" value="1"/>
</dbReference>
<dbReference type="InterPro" id="IPR016181">
    <property type="entry name" value="Acyl_CoA_acyltransferase"/>
</dbReference>
<dbReference type="InterPro" id="IPR004616">
    <property type="entry name" value="Leu/Phe-tRNA_Trfase"/>
</dbReference>
<dbReference type="InterPro" id="IPR042203">
    <property type="entry name" value="Leu/Phe-tRNA_Trfase_C"/>
</dbReference>
<dbReference type="InterPro" id="IPR042221">
    <property type="entry name" value="Leu/Phe-tRNA_Trfase_N"/>
</dbReference>
<dbReference type="NCBIfam" id="TIGR00667">
    <property type="entry name" value="aat"/>
    <property type="match status" value="1"/>
</dbReference>
<dbReference type="PANTHER" id="PTHR30098">
    <property type="entry name" value="LEUCYL/PHENYLALANYL-TRNA--PROTEIN TRANSFERASE"/>
    <property type="match status" value="1"/>
</dbReference>
<dbReference type="PANTHER" id="PTHR30098:SF2">
    <property type="entry name" value="LEUCYL_PHENYLALANYL-TRNA--PROTEIN TRANSFERASE"/>
    <property type="match status" value="1"/>
</dbReference>
<dbReference type="Pfam" id="PF03588">
    <property type="entry name" value="Leu_Phe_trans"/>
    <property type="match status" value="1"/>
</dbReference>
<dbReference type="SUPFAM" id="SSF55729">
    <property type="entry name" value="Acyl-CoA N-acyltransferases (Nat)"/>
    <property type="match status" value="1"/>
</dbReference>
<name>LFTR_XANCB</name>
<keyword id="KW-0012">Acyltransferase</keyword>
<keyword id="KW-0963">Cytoplasm</keyword>
<keyword id="KW-0808">Transferase</keyword>
<organism>
    <name type="scientific">Xanthomonas campestris pv. campestris (strain B100)</name>
    <dbReference type="NCBI Taxonomy" id="509169"/>
    <lineage>
        <taxon>Bacteria</taxon>
        <taxon>Pseudomonadati</taxon>
        <taxon>Pseudomonadota</taxon>
        <taxon>Gammaproteobacteria</taxon>
        <taxon>Lysobacterales</taxon>
        <taxon>Lysobacteraceae</taxon>
        <taxon>Xanthomonas</taxon>
    </lineage>
</organism>
<feature type="chain" id="PRO_1000131957" description="Leucyl/phenylalanyl-tRNA--protein transferase">
    <location>
        <begin position="1"/>
        <end position="249"/>
    </location>
</feature>
<feature type="region of interest" description="Disordered" evidence="2">
    <location>
        <begin position="1"/>
        <end position="21"/>
    </location>
</feature>
<protein>
    <recommendedName>
        <fullName evidence="1">Leucyl/phenylalanyl-tRNA--protein transferase</fullName>
        <ecNumber evidence="1">2.3.2.6</ecNumber>
    </recommendedName>
    <alternativeName>
        <fullName evidence="1">L/F-transferase</fullName>
    </alternativeName>
    <alternativeName>
        <fullName evidence="1">Leucyltransferase</fullName>
    </alternativeName>
    <alternativeName>
        <fullName evidence="1">Phenyalanyltransferase</fullName>
    </alternativeName>
</protein>